<protein>
    <recommendedName>
        <fullName evidence="1">5-methyltetrahydropteroyltriglutamate--homocysteine methyltransferase</fullName>
        <ecNumber evidence="1">2.1.1.14</ecNumber>
    </recommendedName>
    <alternativeName>
        <fullName evidence="1">Cobalamin-independent methionine synthase</fullName>
    </alternativeName>
    <alternativeName>
        <fullName evidence="1">Methionine synthase, vitamin-B12 independent isozyme</fullName>
    </alternativeName>
</protein>
<name>METE_STAAR</name>
<gene>
    <name evidence="1" type="primary">metE</name>
    <name type="ordered locus">SAR0353</name>
</gene>
<feature type="chain" id="PRO_0000098661" description="5-methyltetrahydropteroyltriglutamate--homocysteine methyltransferase">
    <location>
        <begin position="1"/>
        <end position="742"/>
    </location>
</feature>
<feature type="active site" description="Proton donor" evidence="1">
    <location>
        <position position="683"/>
    </location>
</feature>
<feature type="binding site" evidence="1">
    <location>
        <begin position="18"/>
        <end position="21"/>
    </location>
    <ligand>
        <name>5-methyltetrahydropteroyltri-L-glutamate</name>
        <dbReference type="ChEBI" id="CHEBI:58207"/>
    </ligand>
</feature>
<feature type="binding site" evidence="1">
    <location>
        <position position="112"/>
    </location>
    <ligand>
        <name>5-methyltetrahydropteroyltri-L-glutamate</name>
        <dbReference type="ChEBI" id="CHEBI:58207"/>
    </ligand>
</feature>
<feature type="binding site" evidence="1">
    <location>
        <begin position="420"/>
        <end position="422"/>
    </location>
    <ligand>
        <name>L-homocysteine</name>
        <dbReference type="ChEBI" id="CHEBI:58199"/>
    </ligand>
</feature>
<feature type="binding site" evidence="1">
    <location>
        <begin position="420"/>
        <end position="422"/>
    </location>
    <ligand>
        <name>L-methionine</name>
        <dbReference type="ChEBI" id="CHEBI:57844"/>
    </ligand>
</feature>
<feature type="binding site" evidence="1">
    <location>
        <position position="473"/>
    </location>
    <ligand>
        <name>L-homocysteine</name>
        <dbReference type="ChEBI" id="CHEBI:58199"/>
    </ligand>
</feature>
<feature type="binding site" evidence="1">
    <location>
        <position position="473"/>
    </location>
    <ligand>
        <name>L-methionine</name>
        <dbReference type="ChEBI" id="CHEBI:57844"/>
    </ligand>
</feature>
<feature type="binding site" evidence="1">
    <location>
        <position position="550"/>
    </location>
    <ligand>
        <name>5-methyltetrahydropteroyltri-L-glutamate</name>
        <dbReference type="ChEBI" id="CHEBI:58207"/>
    </ligand>
</feature>
<feature type="binding site" evidence="1">
    <location>
        <position position="588"/>
    </location>
    <ligand>
        <name>L-homocysteine</name>
        <dbReference type="ChEBI" id="CHEBI:58199"/>
    </ligand>
</feature>
<feature type="binding site" evidence="1">
    <location>
        <position position="588"/>
    </location>
    <ligand>
        <name>L-methionine</name>
        <dbReference type="ChEBI" id="CHEBI:57844"/>
    </ligand>
</feature>
<feature type="binding site" evidence="1">
    <location>
        <position position="594"/>
    </location>
    <ligand>
        <name>5-methyltetrahydropteroyltri-L-glutamate</name>
        <dbReference type="ChEBI" id="CHEBI:58207"/>
    </ligand>
</feature>
<feature type="binding site" evidence="1">
    <location>
        <position position="630"/>
    </location>
    <ligand>
        <name>Zn(2+)</name>
        <dbReference type="ChEBI" id="CHEBI:29105"/>
        <note>catalytic</note>
    </ligand>
</feature>
<feature type="binding site" evidence="1">
    <location>
        <position position="632"/>
    </location>
    <ligand>
        <name>Zn(2+)</name>
        <dbReference type="ChEBI" id="CHEBI:29105"/>
        <note>catalytic</note>
    </ligand>
</feature>
<feature type="binding site" evidence="1">
    <location>
        <position position="654"/>
    </location>
    <ligand>
        <name>Zn(2+)</name>
        <dbReference type="ChEBI" id="CHEBI:29105"/>
        <note>catalytic</note>
    </ligand>
</feature>
<feature type="binding site" evidence="1">
    <location>
        <position position="715"/>
    </location>
    <ligand>
        <name>Zn(2+)</name>
        <dbReference type="ChEBI" id="CHEBI:29105"/>
        <note>catalytic</note>
    </ligand>
</feature>
<sequence>MTTIKTSNLGFPRLGRKREWKKAIESYWAKKISKEELDQTLTDLHKENLLLQKYYHLDSIPVGDFSLYDHILDTSLLFNIIPERFQGRTIDDDLLFDIARGNKDHVASALIKWFNTNYHYIVPEWDNVEPKVSRNVLLDRFKYAQSLNVNAHPVIVGPITFVKLSKGGHQTFEEKVKTLLPLYKEVFESLIDAGAEYIQVDEPILVTDDSESYENITREAYDYFEKAGVAKKLVIQTYFERAHLKFLSSLPVGGLGLDFVHDNGYNLKQIEAGDFDKSKTLYAGIIDGRNVWASDIEAKKVLIDKLLAHTNELVIQPSSSLLHVPVSLDDETLDTSVGEGLSFATEKLDELDALRRLFNQNDSVKYDKLKARYERFQNQSFKNLDYDFESVRTSRQSPFAQRIEQQQKRLNLPDLPTTTIGSFPQSREVRKYRADWKNKRITDEAYETFLKNEIARWIKIQEDIGLDVLVHGEFERNDMVEFFGEKLQGFLVTKFGWVQSYGSRAVKPPIIYGDVKWTAPLTVDETVYAQSLTDKPVKGMLTGPVTILNWSFERVDLPRKVVQDQIALAINEEVLALEAAGIKVIQVDEPALREGLPLRSEYHEQYLKDAVLSFKLATSSVRDETQIHTHMCYSQFGQIIHAIHDLDADVISIETSRSHGDLIKDFEDINYDLGIGLGVYDIHSPRIPTKEEITTAINRSLQQIDRSLFWVNPDCGLKTRKEEEVKDALTVLVNAVKAKRQE</sequence>
<evidence type="ECO:0000255" key="1">
    <source>
        <dbReference type="HAMAP-Rule" id="MF_00172"/>
    </source>
</evidence>
<proteinExistence type="inferred from homology"/>
<keyword id="KW-0028">Amino-acid biosynthesis</keyword>
<keyword id="KW-0479">Metal-binding</keyword>
<keyword id="KW-0486">Methionine biosynthesis</keyword>
<keyword id="KW-0489">Methyltransferase</keyword>
<keyword id="KW-0677">Repeat</keyword>
<keyword id="KW-0808">Transferase</keyword>
<keyword id="KW-0862">Zinc</keyword>
<reference key="1">
    <citation type="journal article" date="2004" name="Proc. Natl. Acad. Sci. U.S.A.">
        <title>Complete genomes of two clinical Staphylococcus aureus strains: evidence for the rapid evolution of virulence and drug resistance.</title>
        <authorList>
            <person name="Holden M.T.G."/>
            <person name="Feil E.J."/>
            <person name="Lindsay J.A."/>
            <person name="Peacock S.J."/>
            <person name="Day N.P.J."/>
            <person name="Enright M.C."/>
            <person name="Foster T.J."/>
            <person name="Moore C.E."/>
            <person name="Hurst L."/>
            <person name="Atkin R."/>
            <person name="Barron A."/>
            <person name="Bason N."/>
            <person name="Bentley S.D."/>
            <person name="Chillingworth C."/>
            <person name="Chillingworth T."/>
            <person name="Churcher C."/>
            <person name="Clark L."/>
            <person name="Corton C."/>
            <person name="Cronin A."/>
            <person name="Doggett J."/>
            <person name="Dowd L."/>
            <person name="Feltwell T."/>
            <person name="Hance Z."/>
            <person name="Harris B."/>
            <person name="Hauser H."/>
            <person name="Holroyd S."/>
            <person name="Jagels K."/>
            <person name="James K.D."/>
            <person name="Lennard N."/>
            <person name="Line A."/>
            <person name="Mayes R."/>
            <person name="Moule S."/>
            <person name="Mungall K."/>
            <person name="Ormond D."/>
            <person name="Quail M.A."/>
            <person name="Rabbinowitsch E."/>
            <person name="Rutherford K.M."/>
            <person name="Sanders M."/>
            <person name="Sharp S."/>
            <person name="Simmonds M."/>
            <person name="Stevens K."/>
            <person name="Whitehead S."/>
            <person name="Barrell B.G."/>
            <person name="Spratt B.G."/>
            <person name="Parkhill J."/>
        </authorList>
    </citation>
    <scope>NUCLEOTIDE SEQUENCE [LARGE SCALE GENOMIC DNA]</scope>
    <source>
        <strain>MRSA252</strain>
    </source>
</reference>
<organism>
    <name type="scientific">Staphylococcus aureus (strain MRSA252)</name>
    <dbReference type="NCBI Taxonomy" id="282458"/>
    <lineage>
        <taxon>Bacteria</taxon>
        <taxon>Bacillati</taxon>
        <taxon>Bacillota</taxon>
        <taxon>Bacilli</taxon>
        <taxon>Bacillales</taxon>
        <taxon>Staphylococcaceae</taxon>
        <taxon>Staphylococcus</taxon>
    </lineage>
</organism>
<accession>Q6GJW2</accession>
<dbReference type="EC" id="2.1.1.14" evidence="1"/>
<dbReference type="EMBL" id="BX571856">
    <property type="protein sequence ID" value="CAG39376.1"/>
    <property type="molecule type" value="Genomic_DNA"/>
</dbReference>
<dbReference type="RefSeq" id="WP_000207619.1">
    <property type="nucleotide sequence ID" value="NC_002952.2"/>
</dbReference>
<dbReference type="SMR" id="Q6GJW2"/>
<dbReference type="KEGG" id="sar:SAR0353"/>
<dbReference type="HOGENOM" id="CLU_013175_0_0_9"/>
<dbReference type="UniPathway" id="UPA00051">
    <property type="reaction ID" value="UER00082"/>
</dbReference>
<dbReference type="Proteomes" id="UP000000596">
    <property type="component" value="Chromosome"/>
</dbReference>
<dbReference type="GO" id="GO:0003871">
    <property type="term" value="F:5-methyltetrahydropteroyltriglutamate-homocysteine S-methyltransferase activity"/>
    <property type="evidence" value="ECO:0007669"/>
    <property type="project" value="UniProtKB-UniRule"/>
</dbReference>
<dbReference type="GO" id="GO:0008270">
    <property type="term" value="F:zinc ion binding"/>
    <property type="evidence" value="ECO:0007669"/>
    <property type="project" value="InterPro"/>
</dbReference>
<dbReference type="GO" id="GO:0009086">
    <property type="term" value="P:methionine biosynthetic process"/>
    <property type="evidence" value="ECO:0007669"/>
    <property type="project" value="UniProtKB-UniRule"/>
</dbReference>
<dbReference type="GO" id="GO:0032259">
    <property type="term" value="P:methylation"/>
    <property type="evidence" value="ECO:0007669"/>
    <property type="project" value="UniProtKB-KW"/>
</dbReference>
<dbReference type="CDD" id="cd03311">
    <property type="entry name" value="CIMS_C_terminal_like"/>
    <property type="match status" value="1"/>
</dbReference>
<dbReference type="CDD" id="cd03312">
    <property type="entry name" value="CIMS_N_terminal_like"/>
    <property type="match status" value="1"/>
</dbReference>
<dbReference type="Gene3D" id="3.20.20.210">
    <property type="match status" value="2"/>
</dbReference>
<dbReference type="HAMAP" id="MF_00172">
    <property type="entry name" value="Meth_synth"/>
    <property type="match status" value="1"/>
</dbReference>
<dbReference type="InterPro" id="IPR013215">
    <property type="entry name" value="Cbl-indep_Met_Synth_N"/>
</dbReference>
<dbReference type="InterPro" id="IPR006276">
    <property type="entry name" value="Cobalamin-indep_Met_synthase"/>
</dbReference>
<dbReference type="InterPro" id="IPR002629">
    <property type="entry name" value="Met_Synth_C/arc"/>
</dbReference>
<dbReference type="InterPro" id="IPR038071">
    <property type="entry name" value="UROD/MetE-like_sf"/>
</dbReference>
<dbReference type="NCBIfam" id="TIGR01371">
    <property type="entry name" value="met_syn_B12ind"/>
    <property type="match status" value="1"/>
</dbReference>
<dbReference type="NCBIfam" id="NF003556">
    <property type="entry name" value="PRK05222.1"/>
    <property type="match status" value="1"/>
</dbReference>
<dbReference type="PANTHER" id="PTHR30519">
    <property type="entry name" value="5-METHYLTETRAHYDROPTEROYLTRIGLUTAMATE--HOMOCYSTEINE METHYLTRANSFERASE"/>
    <property type="match status" value="1"/>
</dbReference>
<dbReference type="Pfam" id="PF08267">
    <property type="entry name" value="Meth_synt_1"/>
    <property type="match status" value="1"/>
</dbReference>
<dbReference type="Pfam" id="PF01717">
    <property type="entry name" value="Meth_synt_2"/>
    <property type="match status" value="1"/>
</dbReference>
<dbReference type="PIRSF" id="PIRSF000382">
    <property type="entry name" value="MeTrfase_B12_ind"/>
    <property type="match status" value="1"/>
</dbReference>
<dbReference type="SUPFAM" id="SSF51726">
    <property type="entry name" value="UROD/MetE-like"/>
    <property type="match status" value="2"/>
</dbReference>
<comment type="function">
    <text evidence="1">Catalyzes the transfer of a methyl group from 5-methyltetrahydrofolate to homocysteine resulting in methionine formation.</text>
</comment>
<comment type="catalytic activity">
    <reaction evidence="1">
        <text>5-methyltetrahydropteroyltri-L-glutamate + L-homocysteine = tetrahydropteroyltri-L-glutamate + L-methionine</text>
        <dbReference type="Rhea" id="RHEA:21196"/>
        <dbReference type="ChEBI" id="CHEBI:57844"/>
        <dbReference type="ChEBI" id="CHEBI:58140"/>
        <dbReference type="ChEBI" id="CHEBI:58199"/>
        <dbReference type="ChEBI" id="CHEBI:58207"/>
        <dbReference type="EC" id="2.1.1.14"/>
    </reaction>
</comment>
<comment type="cofactor">
    <cofactor evidence="1">
        <name>Zn(2+)</name>
        <dbReference type="ChEBI" id="CHEBI:29105"/>
    </cofactor>
    <text evidence="1">Binds 1 zinc ion per subunit.</text>
</comment>
<comment type="pathway">
    <text evidence="1">Amino-acid biosynthesis; L-methionine biosynthesis via de novo pathway; L-methionine from L-homocysteine (MetE route): step 1/1.</text>
</comment>
<comment type="similarity">
    <text evidence="1">Belongs to the vitamin-B12 independent methionine synthase family.</text>
</comment>